<reference key="1">
    <citation type="journal article" date="1999" name="Nature">
        <title>Sequence and analysis of chromosome 2 of the plant Arabidopsis thaliana.</title>
        <authorList>
            <person name="Lin X."/>
            <person name="Kaul S."/>
            <person name="Rounsley S.D."/>
            <person name="Shea T.P."/>
            <person name="Benito M.-I."/>
            <person name="Town C.D."/>
            <person name="Fujii C.Y."/>
            <person name="Mason T.M."/>
            <person name="Bowman C.L."/>
            <person name="Barnstead M.E."/>
            <person name="Feldblyum T.V."/>
            <person name="Buell C.R."/>
            <person name="Ketchum K.A."/>
            <person name="Lee J.J."/>
            <person name="Ronning C.M."/>
            <person name="Koo H.L."/>
            <person name="Moffat K.S."/>
            <person name="Cronin L.A."/>
            <person name="Shen M."/>
            <person name="Pai G."/>
            <person name="Van Aken S."/>
            <person name="Umayam L."/>
            <person name="Tallon L.J."/>
            <person name="Gill J.E."/>
            <person name="Adams M.D."/>
            <person name="Carrera A.J."/>
            <person name="Creasy T.H."/>
            <person name="Goodman H.M."/>
            <person name="Somerville C.R."/>
            <person name="Copenhaver G.P."/>
            <person name="Preuss D."/>
            <person name="Nierman W.C."/>
            <person name="White O."/>
            <person name="Eisen J.A."/>
            <person name="Salzberg S.L."/>
            <person name="Fraser C.M."/>
            <person name="Venter J.C."/>
        </authorList>
    </citation>
    <scope>NUCLEOTIDE SEQUENCE [LARGE SCALE GENOMIC DNA]</scope>
    <source>
        <strain>cv. Columbia</strain>
    </source>
</reference>
<reference key="2">
    <citation type="journal article" date="2017" name="Plant J.">
        <title>Araport11: a complete reannotation of the Arabidopsis thaliana reference genome.</title>
        <authorList>
            <person name="Cheng C.Y."/>
            <person name="Krishnakumar V."/>
            <person name="Chan A.P."/>
            <person name="Thibaud-Nissen F."/>
            <person name="Schobel S."/>
            <person name="Town C.D."/>
        </authorList>
    </citation>
    <scope>GENOME REANNOTATION</scope>
    <source>
        <strain>cv. Columbia</strain>
    </source>
</reference>
<reference key="3">
    <citation type="submission" date="2004-08" db="EMBL/GenBank/DDBJ databases">
        <title>Arabidopsis ORF clones.</title>
        <authorList>
            <person name="Cheuk R.F."/>
            <person name="Chen H."/>
            <person name="Kim C.J."/>
            <person name="Shinn P."/>
            <person name="Ecker J.R."/>
        </authorList>
    </citation>
    <scope>NUCLEOTIDE SEQUENCE [LARGE SCALE MRNA] OF 36-213</scope>
    <source>
        <strain>cv. Columbia</strain>
    </source>
</reference>
<reference key="4">
    <citation type="journal article" date="2004" name="Plant J.">
        <title>Sorting signals in the cytosolic tail of membrane proteins involved in the interaction with plant ARF1 and coatomer.</title>
        <authorList>
            <person name="Contreras I."/>
            <person name="Ortiz-Zapater E."/>
            <person name="Aniento F."/>
        </authorList>
    </citation>
    <scope>INTERACTION WITH ARF1 AND COATOMER</scope>
    <scope>DOMAIN</scope>
    <scope>MUTAGENESIS OF 206-PHE-PHE-207 AND 210-LYS-LYS-211</scope>
    <scope>FUNCTION</scope>
</reference>
<reference key="5">
    <citation type="journal article" date="2012" name="J. Exp. Bot.">
        <title>Coupled transport of Arabidopsis p24 proteins at the ER-Golgi interface.</title>
        <authorList>
            <person name="Montesinos J.C."/>
            <person name="Sturm S."/>
            <person name="Langhans M."/>
            <person name="Hillmer S."/>
            <person name="Marcote M.J."/>
            <person name="Robinson D.G."/>
            <person name="Aniento F."/>
        </authorList>
    </citation>
    <scope>GENE FAMILY</scope>
    <scope>NOMENCLATURE</scope>
</reference>
<reference key="6">
    <citation type="journal article" date="2012" name="Traffic">
        <title>Subclass-specific localization and trafficking of Arabidopsis p24 proteins in the ER-Golgi interface.</title>
        <authorList>
            <person name="Chen J."/>
            <person name="Qi X."/>
            <person name="Zheng H."/>
        </authorList>
    </citation>
    <scope>GENE FAMILY</scope>
    <scope>SUBCELLULAR LOCATION</scope>
    <scope>COILED-COIL DOMAIN</scope>
</reference>
<keyword id="KW-0175">Coiled coil</keyword>
<keyword id="KW-0256">Endoplasmic reticulum</keyword>
<keyword id="KW-0931">ER-Golgi transport</keyword>
<keyword id="KW-0325">Glycoprotein</keyword>
<keyword id="KW-0333">Golgi apparatus</keyword>
<keyword id="KW-0472">Membrane</keyword>
<keyword id="KW-0488">Methylation</keyword>
<keyword id="KW-0653">Protein transport</keyword>
<keyword id="KW-1185">Reference proteome</keyword>
<keyword id="KW-0732">Signal</keyword>
<keyword id="KW-0812">Transmembrane</keyword>
<keyword id="KW-1133">Transmembrane helix</keyword>
<keyword id="KW-0813">Transport</keyword>
<gene>
    <name type="ordered locus">At2g03290</name>
    <name type="ORF">T18E12.3</name>
    <name type="ORF">T4M8.28</name>
</gene>
<dbReference type="EMBL" id="AC005313">
    <property type="protein sequence ID" value="AAM15035.1"/>
    <property type="molecule type" value="Genomic_DNA"/>
</dbReference>
<dbReference type="EMBL" id="AC006284">
    <property type="protein sequence ID" value="AAD17445.1"/>
    <property type="molecule type" value="Genomic_DNA"/>
</dbReference>
<dbReference type="EMBL" id="CP002685">
    <property type="protein sequence ID" value="AEC05684.1"/>
    <property type="molecule type" value="Genomic_DNA"/>
</dbReference>
<dbReference type="EMBL" id="BT015148">
    <property type="protein sequence ID" value="AAT85744.1"/>
    <property type="status" value="ALT_INIT"/>
    <property type="molecule type" value="mRNA"/>
</dbReference>
<dbReference type="EMBL" id="BT015664">
    <property type="protein sequence ID" value="AAU15163.1"/>
    <property type="molecule type" value="mRNA"/>
</dbReference>
<dbReference type="PIR" id="T02697">
    <property type="entry name" value="T02697"/>
</dbReference>
<dbReference type="RefSeq" id="NP_178428.3">
    <property type="nucleotide sequence ID" value="NM_126380.5"/>
</dbReference>
<dbReference type="SMR" id="O81045"/>
<dbReference type="FunCoup" id="O81045">
    <property type="interactions" value="2960"/>
</dbReference>
<dbReference type="STRING" id="3702.O81045"/>
<dbReference type="GlyGen" id="O81045">
    <property type="glycosylation" value="2 sites"/>
</dbReference>
<dbReference type="PaxDb" id="3702-AT2G03290.1"/>
<dbReference type="ProteomicsDB" id="248683"/>
<dbReference type="EnsemblPlants" id="AT2G03290.1">
    <property type="protein sequence ID" value="AT2G03290.1"/>
    <property type="gene ID" value="AT2G03290"/>
</dbReference>
<dbReference type="GeneID" id="814858"/>
<dbReference type="Gramene" id="AT2G03290.1">
    <property type="protein sequence ID" value="AT2G03290.1"/>
    <property type="gene ID" value="AT2G03290"/>
</dbReference>
<dbReference type="KEGG" id="ath:AT2G03290"/>
<dbReference type="Araport" id="AT2G03290"/>
<dbReference type="TAIR" id="AT2G03290"/>
<dbReference type="eggNOG" id="KOG1691">
    <property type="taxonomic scope" value="Eukaryota"/>
</dbReference>
<dbReference type="HOGENOM" id="CLU_066963_3_2_1"/>
<dbReference type="InParanoid" id="O81045"/>
<dbReference type="OMA" id="TMVSIHE"/>
<dbReference type="PhylomeDB" id="O81045"/>
<dbReference type="PRO" id="PR:O81045"/>
<dbReference type="Proteomes" id="UP000006548">
    <property type="component" value="Chromosome 2"/>
</dbReference>
<dbReference type="ExpressionAtlas" id="O81045">
    <property type="expression patterns" value="baseline and differential"/>
</dbReference>
<dbReference type="GO" id="GO:0005789">
    <property type="term" value="C:endoplasmic reticulum membrane"/>
    <property type="evidence" value="ECO:0007669"/>
    <property type="project" value="UniProtKB-SubCell"/>
</dbReference>
<dbReference type="GO" id="GO:0032580">
    <property type="term" value="C:Golgi cisterna membrane"/>
    <property type="evidence" value="ECO:0007669"/>
    <property type="project" value="UniProtKB-SubCell"/>
</dbReference>
<dbReference type="GO" id="GO:0015031">
    <property type="term" value="P:protein transport"/>
    <property type="evidence" value="ECO:0007669"/>
    <property type="project" value="UniProtKB-KW"/>
</dbReference>
<dbReference type="GO" id="GO:0016192">
    <property type="term" value="P:vesicle-mediated transport"/>
    <property type="evidence" value="ECO:0007669"/>
    <property type="project" value="UniProtKB-KW"/>
</dbReference>
<dbReference type="InterPro" id="IPR015720">
    <property type="entry name" value="Emp24-like"/>
</dbReference>
<dbReference type="InterPro" id="IPR009038">
    <property type="entry name" value="GOLD_dom"/>
</dbReference>
<dbReference type="PANTHER" id="PTHR22811">
    <property type="entry name" value="TRANSMEMBRANE EMP24 DOMAIN-CONTAINING PROTEIN"/>
    <property type="match status" value="1"/>
</dbReference>
<dbReference type="Pfam" id="PF01105">
    <property type="entry name" value="EMP24_GP25L"/>
    <property type="match status" value="1"/>
</dbReference>
<dbReference type="SMART" id="SM01190">
    <property type="entry name" value="EMP24_GP25L"/>
    <property type="match status" value="1"/>
</dbReference>
<dbReference type="PROSITE" id="PS50866">
    <property type="entry name" value="GOLD"/>
    <property type="match status" value="1"/>
</dbReference>
<proteinExistence type="evidence at protein level"/>
<feature type="signal peptide" evidence="2">
    <location>
        <begin position="1"/>
        <end position="22"/>
    </location>
</feature>
<feature type="chain" id="PRO_0000419788" description="Transmembrane emp24 domain-containing protein p24delta8">
    <location>
        <begin position="23"/>
        <end position="213"/>
    </location>
</feature>
<feature type="topological domain" description="Lumenal" evidence="2">
    <location>
        <begin position="23"/>
        <end position="180"/>
    </location>
</feature>
<feature type="transmembrane region" description="Helical" evidence="2">
    <location>
        <begin position="181"/>
        <end position="203"/>
    </location>
</feature>
<feature type="topological domain" description="Cytoplasmic" evidence="2">
    <location>
        <begin position="204"/>
        <end position="213"/>
    </location>
</feature>
<feature type="domain" description="GOLD" evidence="3">
    <location>
        <begin position="32"/>
        <end position="148"/>
    </location>
</feature>
<feature type="region of interest" description="Interaction with ARF1" evidence="1">
    <location>
        <begin position="202"/>
        <end position="213"/>
    </location>
</feature>
<feature type="coiled-coil region" evidence="2">
    <location>
        <begin position="163"/>
        <end position="176"/>
    </location>
</feature>
<feature type="short sequence motif" description="COPI vesicle coat-binding">
    <location>
        <begin position="206"/>
        <end position="213"/>
    </location>
</feature>
<feature type="short sequence motif" description="COPII vesicle coat-binding">
    <location>
        <begin position="206"/>
        <end position="207"/>
    </location>
</feature>
<feature type="modified residue" description="Omega-N-methylated arginine" evidence="1">
    <location>
        <position position="166"/>
    </location>
</feature>
<feature type="glycosylation site" description="N-linked (GlcNAc...) asparagine" evidence="2">
    <location>
        <position position="97"/>
    </location>
</feature>
<feature type="glycosylation site" description="N-linked (GlcNAc...) asparagine" evidence="2">
    <location>
        <position position="174"/>
    </location>
</feature>
<feature type="mutagenesis site" description="Slightly reduces association with COPI vesicle coat and interaction with ARF1." evidence="4">
    <original>FF</original>
    <variation>AA</variation>
    <location>
        <begin position="206"/>
        <end position="207"/>
    </location>
</feature>
<feature type="mutagenesis site" description="Disrupts association with COPI vesicle coat and interaction with ARF1." evidence="4">
    <original>KK</original>
    <variation>SS</variation>
    <location>
        <begin position="210"/>
        <end position="211"/>
    </location>
</feature>
<evidence type="ECO:0000250" key="1"/>
<evidence type="ECO:0000255" key="2"/>
<evidence type="ECO:0000255" key="3">
    <source>
        <dbReference type="PROSITE-ProRule" id="PRU00096"/>
    </source>
</evidence>
<evidence type="ECO:0000269" key="4">
    <source>
    </source>
</evidence>
<evidence type="ECO:0000269" key="5">
    <source>
    </source>
</evidence>
<evidence type="ECO:0000305" key="6"/>
<name>P24D8_ARATH</name>
<protein>
    <recommendedName>
        <fullName>Transmembrane emp24 domain-containing protein p24delta8</fullName>
    </recommendedName>
    <alternativeName>
        <fullName>p24 family protein delta2b</fullName>
        <shortName>p24delta2b</shortName>
    </alternativeName>
    <alternativeName>
        <fullName>p24 family protein delta8</fullName>
        <shortName>p24delta8</shortName>
    </alternativeName>
</protein>
<sequence>MDLCRSSILLLIIALLSPRTLSMRYELKSSKTKCIGEEIHENAMSIGKYFIVNPNEDNHPLPDSHKIIVKVMPPQGKNLHEADKVEAGQFSFTAYENGSYVACITAIDYKPETTLTIDFDWKTGVHSKEWTNVAKKSQVDMMEYQVKTLMDTVISIHEEMYYLREREEEMQELNRSTNSKMAWLSFGSLVVCLSVAGLQFWHLKTFFEKKKLI</sequence>
<organism>
    <name type="scientific">Arabidopsis thaliana</name>
    <name type="common">Mouse-ear cress</name>
    <dbReference type="NCBI Taxonomy" id="3702"/>
    <lineage>
        <taxon>Eukaryota</taxon>
        <taxon>Viridiplantae</taxon>
        <taxon>Streptophyta</taxon>
        <taxon>Embryophyta</taxon>
        <taxon>Tracheophyta</taxon>
        <taxon>Spermatophyta</taxon>
        <taxon>Magnoliopsida</taxon>
        <taxon>eudicotyledons</taxon>
        <taxon>Gunneridae</taxon>
        <taxon>Pentapetalae</taxon>
        <taxon>rosids</taxon>
        <taxon>malvids</taxon>
        <taxon>Brassicales</taxon>
        <taxon>Brassicaceae</taxon>
        <taxon>Camelineae</taxon>
        <taxon>Arabidopsis</taxon>
    </lineage>
</organism>
<comment type="function">
    <text evidence="1 4">Involved in vesicular protein trafficking. Mainly functions in the early secretory pathway. Thought to act as cargo receptor at the lumenal side for incorporation of secretory cargo molecules into transport vesicles and to be involved in vesicle coat formation at the cytoplasmic side (By similarity). On Golgi membranes, acts as a primary receptor for ARF1-GDP which is involved in COPI-vesicle formation.</text>
</comment>
<comment type="subunit">
    <text evidence="1 4">Probably oligomerizes with other members of the EMP24/GP25L family (By similarity). Associates with the COPI vesicle coat (coatomer). Associates with the COPII vesicle coat (coatomer). Interacts with ARF1 (GDP-bound).</text>
</comment>
<comment type="subcellular location">
    <subcellularLocation>
        <location evidence="5">Endoplasmic reticulum membrane</location>
        <topology evidence="5">Single-pass type I membrane protein</topology>
    </subcellularLocation>
    <subcellularLocation>
        <location evidence="5">Golgi apparatus</location>
        <location evidence="5">cis-Golgi network membrane</location>
        <topology evidence="5">Single-pass type I membrane protein</topology>
    </subcellularLocation>
    <subcellularLocation>
        <location evidence="5">Golgi apparatus</location>
        <location evidence="5">Golgi stack membrane</location>
        <topology evidence="5">Single-pass type I membrane protein</topology>
    </subcellularLocation>
    <text>Cycles between the endoplasmic reticulum and Golgi via COPI and COPII dependent pathways.</text>
</comment>
<comment type="domain">
    <text evidence="4">The cytoplasmic C-terminal domain contains a functional dilysine-retrieval motif, which is involved in the retrograde Golgi-to-ER transport of the protein.</text>
</comment>
<comment type="similarity">
    <text evidence="6">Belongs to the EMP24/GP25L family.</text>
</comment>
<comment type="sequence caution" evidence="6">
    <conflict type="erroneous initiation">
        <sequence resource="EMBL-CDS" id="AAT85744"/>
    </conflict>
    <text>Truncated N-terminus.</text>
</comment>
<accession>O81045</accession>
<accession>Q6AWV0</accession>